<keyword id="KW-0963">Cytoplasm</keyword>
<keyword id="KW-0342">GTP-binding</keyword>
<keyword id="KW-0378">Hydrolase</keyword>
<keyword id="KW-0460">Magnesium</keyword>
<keyword id="KW-0479">Metal-binding</keyword>
<keyword id="KW-0547">Nucleotide-binding</keyword>
<keyword id="KW-0630">Potassium</keyword>
<keyword id="KW-0819">tRNA processing</keyword>
<protein>
    <recommendedName>
        <fullName evidence="1">tRNA modification GTPase MnmE</fullName>
        <ecNumber evidence="1">3.6.-.-</ecNumber>
    </recommendedName>
</protein>
<dbReference type="EC" id="3.6.-.-" evidence="1"/>
<dbReference type="EMBL" id="AE017221">
    <property type="protein sequence ID" value="AAS80910.1"/>
    <property type="molecule type" value="Genomic_DNA"/>
</dbReference>
<dbReference type="RefSeq" id="WP_011173007.1">
    <property type="nucleotide sequence ID" value="NC_005835.1"/>
</dbReference>
<dbReference type="SMR" id="Q72K85"/>
<dbReference type="KEGG" id="tth:TT_C0562"/>
<dbReference type="eggNOG" id="COG0486">
    <property type="taxonomic scope" value="Bacteria"/>
</dbReference>
<dbReference type="HOGENOM" id="CLU_019624_4_0_0"/>
<dbReference type="OrthoDB" id="9805918at2"/>
<dbReference type="Proteomes" id="UP000000592">
    <property type="component" value="Chromosome"/>
</dbReference>
<dbReference type="GO" id="GO:0005829">
    <property type="term" value="C:cytosol"/>
    <property type="evidence" value="ECO:0007669"/>
    <property type="project" value="TreeGrafter"/>
</dbReference>
<dbReference type="GO" id="GO:0005525">
    <property type="term" value="F:GTP binding"/>
    <property type="evidence" value="ECO:0007669"/>
    <property type="project" value="UniProtKB-UniRule"/>
</dbReference>
<dbReference type="GO" id="GO:0003924">
    <property type="term" value="F:GTPase activity"/>
    <property type="evidence" value="ECO:0007669"/>
    <property type="project" value="UniProtKB-UniRule"/>
</dbReference>
<dbReference type="GO" id="GO:0046872">
    <property type="term" value="F:metal ion binding"/>
    <property type="evidence" value="ECO:0007669"/>
    <property type="project" value="UniProtKB-KW"/>
</dbReference>
<dbReference type="GO" id="GO:0030488">
    <property type="term" value="P:tRNA methylation"/>
    <property type="evidence" value="ECO:0007669"/>
    <property type="project" value="TreeGrafter"/>
</dbReference>
<dbReference type="GO" id="GO:0002098">
    <property type="term" value="P:tRNA wobble uridine modification"/>
    <property type="evidence" value="ECO:0007669"/>
    <property type="project" value="TreeGrafter"/>
</dbReference>
<dbReference type="CDD" id="cd04164">
    <property type="entry name" value="trmE"/>
    <property type="match status" value="1"/>
</dbReference>
<dbReference type="CDD" id="cd14858">
    <property type="entry name" value="TrmE_N"/>
    <property type="match status" value="1"/>
</dbReference>
<dbReference type="Gene3D" id="3.40.50.300">
    <property type="entry name" value="P-loop containing nucleotide triphosphate hydrolases"/>
    <property type="match status" value="1"/>
</dbReference>
<dbReference type="Gene3D" id="3.30.1360.120">
    <property type="entry name" value="Probable tRNA modification gtpase trme, domain 1"/>
    <property type="match status" value="1"/>
</dbReference>
<dbReference type="Gene3D" id="1.20.120.430">
    <property type="entry name" value="tRNA modification GTPase MnmE domain 2"/>
    <property type="match status" value="1"/>
</dbReference>
<dbReference type="HAMAP" id="MF_00379">
    <property type="entry name" value="GTPase_MnmE"/>
    <property type="match status" value="1"/>
</dbReference>
<dbReference type="InterPro" id="IPR031168">
    <property type="entry name" value="G_TrmE"/>
</dbReference>
<dbReference type="InterPro" id="IPR006073">
    <property type="entry name" value="GTP-bd"/>
</dbReference>
<dbReference type="InterPro" id="IPR018948">
    <property type="entry name" value="GTP-bd_TrmE_N"/>
</dbReference>
<dbReference type="InterPro" id="IPR004520">
    <property type="entry name" value="GTPase_MnmE"/>
</dbReference>
<dbReference type="InterPro" id="IPR027368">
    <property type="entry name" value="MnmE_dom2"/>
</dbReference>
<dbReference type="InterPro" id="IPR025867">
    <property type="entry name" value="MnmE_helical"/>
</dbReference>
<dbReference type="InterPro" id="IPR027417">
    <property type="entry name" value="P-loop_NTPase"/>
</dbReference>
<dbReference type="InterPro" id="IPR005225">
    <property type="entry name" value="Small_GTP-bd"/>
</dbReference>
<dbReference type="InterPro" id="IPR027266">
    <property type="entry name" value="TrmE/GcvT_dom1"/>
</dbReference>
<dbReference type="NCBIfam" id="TIGR00450">
    <property type="entry name" value="mnmE_trmE_thdF"/>
    <property type="match status" value="1"/>
</dbReference>
<dbReference type="NCBIfam" id="TIGR00231">
    <property type="entry name" value="small_GTP"/>
    <property type="match status" value="1"/>
</dbReference>
<dbReference type="PANTHER" id="PTHR42714">
    <property type="entry name" value="TRNA MODIFICATION GTPASE GTPBP3"/>
    <property type="match status" value="1"/>
</dbReference>
<dbReference type="PANTHER" id="PTHR42714:SF2">
    <property type="entry name" value="TRNA MODIFICATION GTPASE GTPBP3, MITOCHONDRIAL"/>
    <property type="match status" value="1"/>
</dbReference>
<dbReference type="Pfam" id="PF01926">
    <property type="entry name" value="MMR_HSR1"/>
    <property type="match status" value="1"/>
</dbReference>
<dbReference type="Pfam" id="PF12631">
    <property type="entry name" value="MnmE_helical"/>
    <property type="match status" value="1"/>
</dbReference>
<dbReference type="Pfam" id="PF10396">
    <property type="entry name" value="TrmE_N"/>
    <property type="match status" value="1"/>
</dbReference>
<dbReference type="PRINTS" id="PR00326">
    <property type="entry name" value="GTP1OBG"/>
</dbReference>
<dbReference type="SUPFAM" id="SSF52540">
    <property type="entry name" value="P-loop containing nucleoside triphosphate hydrolases"/>
    <property type="match status" value="1"/>
</dbReference>
<dbReference type="PROSITE" id="PS51709">
    <property type="entry name" value="G_TRME"/>
    <property type="match status" value="1"/>
</dbReference>
<name>MNME_THET2</name>
<accession>Q72K85</accession>
<reference key="1">
    <citation type="journal article" date="2004" name="Nat. Biotechnol.">
        <title>The genome sequence of the extreme thermophile Thermus thermophilus.</title>
        <authorList>
            <person name="Henne A."/>
            <person name="Brueggemann H."/>
            <person name="Raasch C."/>
            <person name="Wiezer A."/>
            <person name="Hartsch T."/>
            <person name="Liesegang H."/>
            <person name="Johann A."/>
            <person name="Lienard T."/>
            <person name="Gohl O."/>
            <person name="Martinez-Arias R."/>
            <person name="Jacobi C."/>
            <person name="Starkuviene V."/>
            <person name="Schlenczeck S."/>
            <person name="Dencker S."/>
            <person name="Huber R."/>
            <person name="Klenk H.-P."/>
            <person name="Kramer W."/>
            <person name="Merkl R."/>
            <person name="Gottschalk G."/>
            <person name="Fritz H.-J."/>
        </authorList>
    </citation>
    <scope>NUCLEOTIDE SEQUENCE [LARGE SCALE GENOMIC DNA]</scope>
    <source>
        <strain>ATCC BAA-163 / DSM 7039 / HB27</strain>
    </source>
</reference>
<comment type="function">
    <text evidence="1">Exhibits a very high intrinsic GTPase hydrolysis rate. Involved in the addition of a carboxymethylaminomethyl (cmnm) group at the wobble position (U34) of certain tRNAs, forming tRNA-cmnm(5)s(2)U34.</text>
</comment>
<comment type="cofactor">
    <cofactor evidence="1">
        <name>K(+)</name>
        <dbReference type="ChEBI" id="CHEBI:29103"/>
    </cofactor>
    <text evidence="1">Binds 1 potassium ion per subunit.</text>
</comment>
<comment type="subunit">
    <text evidence="1">Homodimer. Heterotetramer of two MnmE and two MnmG subunits.</text>
</comment>
<comment type="subcellular location">
    <subcellularLocation>
        <location evidence="1">Cytoplasm</location>
    </subcellularLocation>
</comment>
<comment type="similarity">
    <text evidence="1">Belongs to the TRAFAC class TrmE-Era-EngA-EngB-Septin-like GTPase superfamily. TrmE GTPase family.</text>
</comment>
<feature type="chain" id="PRO_0000345929" description="tRNA modification GTPase MnmE">
    <location>
        <begin position="1"/>
        <end position="433"/>
    </location>
</feature>
<feature type="domain" description="TrmE-type G">
    <location>
        <begin position="218"/>
        <end position="363"/>
    </location>
</feature>
<feature type="binding site" evidence="1">
    <location>
        <position position="24"/>
    </location>
    <ligand>
        <name>(6S)-5-formyl-5,6,7,8-tetrahydrofolate</name>
        <dbReference type="ChEBI" id="CHEBI:57457"/>
    </ligand>
</feature>
<feature type="binding site" evidence="1">
    <location>
        <position position="86"/>
    </location>
    <ligand>
        <name>(6S)-5-formyl-5,6,7,8-tetrahydrofolate</name>
        <dbReference type="ChEBI" id="CHEBI:57457"/>
    </ligand>
</feature>
<feature type="binding site" evidence="1">
    <location>
        <position position="125"/>
    </location>
    <ligand>
        <name>(6S)-5-formyl-5,6,7,8-tetrahydrofolate</name>
        <dbReference type="ChEBI" id="CHEBI:57457"/>
    </ligand>
</feature>
<feature type="binding site" evidence="1">
    <location>
        <begin position="228"/>
        <end position="233"/>
    </location>
    <ligand>
        <name>GTP</name>
        <dbReference type="ChEBI" id="CHEBI:37565"/>
    </ligand>
</feature>
<feature type="binding site" evidence="1">
    <location>
        <position position="228"/>
    </location>
    <ligand>
        <name>K(+)</name>
        <dbReference type="ChEBI" id="CHEBI:29103"/>
    </ligand>
</feature>
<feature type="binding site" evidence="1">
    <location>
        <position position="232"/>
    </location>
    <ligand>
        <name>Mg(2+)</name>
        <dbReference type="ChEBI" id="CHEBI:18420"/>
    </ligand>
</feature>
<feature type="binding site" evidence="1">
    <location>
        <begin position="247"/>
        <end position="253"/>
    </location>
    <ligand>
        <name>GTP</name>
        <dbReference type="ChEBI" id="CHEBI:37565"/>
    </ligand>
</feature>
<feature type="binding site" evidence="1">
    <location>
        <position position="247"/>
    </location>
    <ligand>
        <name>K(+)</name>
        <dbReference type="ChEBI" id="CHEBI:29103"/>
    </ligand>
</feature>
<feature type="binding site" evidence="1">
    <location>
        <position position="249"/>
    </location>
    <ligand>
        <name>K(+)</name>
        <dbReference type="ChEBI" id="CHEBI:29103"/>
    </ligand>
</feature>
<feature type="binding site" evidence="1">
    <location>
        <position position="252"/>
    </location>
    <ligand>
        <name>K(+)</name>
        <dbReference type="ChEBI" id="CHEBI:29103"/>
    </ligand>
</feature>
<feature type="binding site" evidence="1">
    <location>
        <position position="253"/>
    </location>
    <ligand>
        <name>Mg(2+)</name>
        <dbReference type="ChEBI" id="CHEBI:18420"/>
    </ligand>
</feature>
<feature type="binding site" evidence="1">
    <location>
        <begin position="272"/>
        <end position="275"/>
    </location>
    <ligand>
        <name>GTP</name>
        <dbReference type="ChEBI" id="CHEBI:37565"/>
    </ligand>
</feature>
<feature type="binding site" evidence="1">
    <location>
        <position position="433"/>
    </location>
    <ligand>
        <name>(6S)-5-formyl-5,6,7,8-tetrahydrofolate</name>
        <dbReference type="ChEBI" id="CHEBI:57457"/>
    </ligand>
</feature>
<proteinExistence type="inferred from homology"/>
<evidence type="ECO:0000255" key="1">
    <source>
        <dbReference type="HAMAP-Rule" id="MF_00379"/>
    </source>
</evidence>
<gene>
    <name evidence="1" type="primary">mnmE</name>
    <name evidence="1" type="synonym">trmE</name>
    <name type="ordered locus">TT_C0562</name>
</gene>
<organism>
    <name type="scientific">Thermus thermophilus (strain ATCC BAA-163 / DSM 7039 / HB27)</name>
    <dbReference type="NCBI Taxonomy" id="262724"/>
    <lineage>
        <taxon>Bacteria</taxon>
        <taxon>Thermotogati</taxon>
        <taxon>Deinococcota</taxon>
        <taxon>Deinococci</taxon>
        <taxon>Thermales</taxon>
        <taxon>Thermaceae</taxon>
        <taxon>Thermus</taxon>
    </lineage>
</organism>
<sequence>MRALRDPICAIATPLGKGAIGVVRLSGEGALEIAARVWRGKDPRRLKGGRFTLGEVVDPKTGEAIDQALLLVFRAPRSYTGEDLVEFQTHGSLAVLRRVMEVLVAEGARPAGRGEFTFRAYMNGKLDLAQAEAVLALIEAEGELARRQALRALEGALSRRIEALENRLLDLLAHIQALLDYPEEGVEPLEAERTLREVLAEVEALLAQAKASRLAQKGARLALIGAPNAGKSSLLNALLGYERALVSPIPGTTRDYLEAPLELFGIPLVAVDTAGVRETEDPVERMGVERALRIAEEADLVLYVVDRSQPKPAPPPLPWARTLKVATKSDLPPAWEDPEFLPVSSLTGEGLGRLKEALREALLGREGGEVLLTERQVEALLRARERLEEALALPEDLMGLALEEAARALALLTGKEVAEEVVARVFQNFCVGK</sequence>